<organism>
    <name type="scientific">Staphylococcus aureus (strain MW2)</name>
    <dbReference type="NCBI Taxonomy" id="196620"/>
    <lineage>
        <taxon>Bacteria</taxon>
        <taxon>Bacillati</taxon>
        <taxon>Bacillota</taxon>
        <taxon>Bacilli</taxon>
        <taxon>Bacillales</taxon>
        <taxon>Staphylococcaceae</taxon>
        <taxon>Staphylococcus</taxon>
    </lineage>
</organism>
<sequence>MSHRYIPLTEKDKQEMLQTIGAKSIGELFGDVPSDILLNRDLNIAEGEAETTLLRRLNRIASKNITKETHTSFLGAGVYDHYAPSVVDAMISRSEFYTAYTPYQPEISQGELQAIFEFQTLICELTDMDVANSSMYDGMTSFAEACILAFSQTKKNKIVVSKGLHYQALQVLHTYAKTRKEFEVVEIDLDGTVTDLKKLEAAVDDETAAVAVQYPNFYGSIEDLEKIHSFIEDKKALFIVYANPLALGLLTPPGSFGADIVVGDTQPFGIPAQFGGPHCGYFATTKKLMRKVPGRLVGQTQDDEGNRGFVLTLQAREQHIRRDKATSNICSNQALNALASSIAMSALGKQGIYDIAVQNIEHANYAKQQFIKKGFEVLDGTSFNEFVVKFDKPIQQVNEELVKYNIIGGFDLGVVSDDFKNHMLIAVTELRTKDEIDTFVEKAGELND</sequence>
<gene>
    <name evidence="1" type="primary">gcvPA</name>
    <name type="ordered locus">MW1488</name>
</gene>
<dbReference type="EC" id="1.4.4.2" evidence="1"/>
<dbReference type="EMBL" id="BA000033">
    <property type="protein sequence ID" value="BAB95353.1"/>
    <property type="molecule type" value="Genomic_DNA"/>
</dbReference>
<dbReference type="RefSeq" id="WP_000019687.1">
    <property type="nucleotide sequence ID" value="NC_003923.1"/>
</dbReference>
<dbReference type="SMR" id="Q8NWC9"/>
<dbReference type="KEGG" id="sam:MW1488"/>
<dbReference type="HOGENOM" id="CLU_004620_0_2_9"/>
<dbReference type="GO" id="GO:0004375">
    <property type="term" value="F:glycine dehydrogenase (decarboxylating) activity"/>
    <property type="evidence" value="ECO:0007669"/>
    <property type="project" value="UniProtKB-EC"/>
</dbReference>
<dbReference type="GO" id="GO:0019464">
    <property type="term" value="P:glycine decarboxylation via glycine cleavage system"/>
    <property type="evidence" value="ECO:0007669"/>
    <property type="project" value="UniProtKB-UniRule"/>
</dbReference>
<dbReference type="GO" id="GO:0009116">
    <property type="term" value="P:nucleoside metabolic process"/>
    <property type="evidence" value="ECO:0007669"/>
    <property type="project" value="InterPro"/>
</dbReference>
<dbReference type="CDD" id="cd00613">
    <property type="entry name" value="GDC-P"/>
    <property type="match status" value="1"/>
</dbReference>
<dbReference type="Gene3D" id="3.90.1150.10">
    <property type="entry name" value="Aspartate Aminotransferase, domain 1"/>
    <property type="match status" value="1"/>
</dbReference>
<dbReference type="Gene3D" id="3.40.640.10">
    <property type="entry name" value="Type I PLP-dependent aspartate aminotransferase-like (Major domain)"/>
    <property type="match status" value="1"/>
</dbReference>
<dbReference type="HAMAP" id="MF_00712">
    <property type="entry name" value="GcvPA"/>
    <property type="match status" value="1"/>
</dbReference>
<dbReference type="InterPro" id="IPR023010">
    <property type="entry name" value="GcvPA"/>
</dbReference>
<dbReference type="InterPro" id="IPR049315">
    <property type="entry name" value="GDC-P_N"/>
</dbReference>
<dbReference type="InterPro" id="IPR020581">
    <property type="entry name" value="GDC_P"/>
</dbReference>
<dbReference type="InterPro" id="IPR015424">
    <property type="entry name" value="PyrdxlP-dep_Trfase"/>
</dbReference>
<dbReference type="InterPro" id="IPR015421">
    <property type="entry name" value="PyrdxlP-dep_Trfase_major"/>
</dbReference>
<dbReference type="InterPro" id="IPR015422">
    <property type="entry name" value="PyrdxlP-dep_Trfase_small"/>
</dbReference>
<dbReference type="NCBIfam" id="NF001696">
    <property type="entry name" value="PRK00451.1"/>
    <property type="match status" value="1"/>
</dbReference>
<dbReference type="PANTHER" id="PTHR42806">
    <property type="entry name" value="GLYCINE CLEAVAGE SYSTEM P-PROTEIN"/>
    <property type="match status" value="1"/>
</dbReference>
<dbReference type="PANTHER" id="PTHR42806:SF1">
    <property type="entry name" value="GLYCINE DEHYDROGENASE (DECARBOXYLATING)"/>
    <property type="match status" value="1"/>
</dbReference>
<dbReference type="Pfam" id="PF02347">
    <property type="entry name" value="GDC-P"/>
    <property type="match status" value="1"/>
</dbReference>
<dbReference type="PIRSF" id="PIRSF006815">
    <property type="entry name" value="GcvPA"/>
    <property type="match status" value="1"/>
</dbReference>
<dbReference type="SUPFAM" id="SSF53383">
    <property type="entry name" value="PLP-dependent transferases"/>
    <property type="match status" value="1"/>
</dbReference>
<protein>
    <recommendedName>
        <fullName evidence="1">Probable glycine dehydrogenase (decarboxylating) subunit 1</fullName>
        <ecNumber evidence="1">1.4.4.2</ecNumber>
    </recommendedName>
    <alternativeName>
        <fullName evidence="1">Glycine cleavage system P-protein subunit 1</fullName>
    </alternativeName>
    <alternativeName>
        <fullName evidence="1">Glycine decarboxylase subunit 1</fullName>
    </alternativeName>
    <alternativeName>
        <fullName evidence="1">Glycine dehydrogenase (aminomethyl-transferring) subunit 1</fullName>
    </alternativeName>
</protein>
<proteinExistence type="inferred from homology"/>
<feature type="chain" id="PRO_0000166975" description="Probable glycine dehydrogenase (decarboxylating) subunit 1">
    <location>
        <begin position="1"/>
        <end position="448"/>
    </location>
</feature>
<evidence type="ECO:0000255" key="1">
    <source>
        <dbReference type="HAMAP-Rule" id="MF_00712"/>
    </source>
</evidence>
<reference key="1">
    <citation type="journal article" date="2002" name="Lancet">
        <title>Genome and virulence determinants of high virulence community-acquired MRSA.</title>
        <authorList>
            <person name="Baba T."/>
            <person name="Takeuchi F."/>
            <person name="Kuroda M."/>
            <person name="Yuzawa H."/>
            <person name="Aoki K."/>
            <person name="Oguchi A."/>
            <person name="Nagai Y."/>
            <person name="Iwama N."/>
            <person name="Asano K."/>
            <person name="Naimi T."/>
            <person name="Kuroda H."/>
            <person name="Cui L."/>
            <person name="Yamamoto K."/>
            <person name="Hiramatsu K."/>
        </authorList>
    </citation>
    <scope>NUCLEOTIDE SEQUENCE [LARGE SCALE GENOMIC DNA]</scope>
    <source>
        <strain>MW2</strain>
    </source>
</reference>
<name>GCSPA_STAAW</name>
<accession>Q8NWC9</accession>
<comment type="function">
    <text evidence="1">The glycine cleavage system catalyzes the degradation of glycine. The P protein binds the alpha-amino group of glycine through its pyridoxal phosphate cofactor; CO(2) is released and the remaining methylamine moiety is then transferred to the lipoamide cofactor of the H protein.</text>
</comment>
<comment type="catalytic activity">
    <reaction evidence="1">
        <text>N(6)-[(R)-lipoyl]-L-lysyl-[glycine-cleavage complex H protein] + glycine + H(+) = N(6)-[(R)-S(8)-aminomethyldihydrolipoyl]-L-lysyl-[glycine-cleavage complex H protein] + CO2</text>
        <dbReference type="Rhea" id="RHEA:24304"/>
        <dbReference type="Rhea" id="RHEA-COMP:10494"/>
        <dbReference type="Rhea" id="RHEA-COMP:10495"/>
        <dbReference type="ChEBI" id="CHEBI:15378"/>
        <dbReference type="ChEBI" id="CHEBI:16526"/>
        <dbReference type="ChEBI" id="CHEBI:57305"/>
        <dbReference type="ChEBI" id="CHEBI:83099"/>
        <dbReference type="ChEBI" id="CHEBI:83143"/>
        <dbReference type="EC" id="1.4.4.2"/>
    </reaction>
</comment>
<comment type="subunit">
    <text evidence="1">The glycine cleavage system is composed of four proteins: P, T, L and H. In this organism, the P 'protein' is a heterodimer of two subunits.</text>
</comment>
<comment type="similarity">
    <text evidence="1">Belongs to the GcvP family. N-terminal subunit subfamily.</text>
</comment>
<keyword id="KW-0560">Oxidoreductase</keyword>